<keyword id="KW-0067">ATP-binding</keyword>
<keyword id="KW-0315">Glutamine amidotransferase</keyword>
<keyword id="KW-0436">Ligase</keyword>
<keyword id="KW-0460">Magnesium</keyword>
<keyword id="KW-0479">Metal-binding</keyword>
<keyword id="KW-0547">Nucleotide-binding</keyword>
<keyword id="KW-0665">Pyrimidine biosynthesis</keyword>
<keyword id="KW-1185">Reference proteome</keyword>
<proteinExistence type="inferred from homology"/>
<dbReference type="EC" id="6.3.4.2" evidence="1"/>
<dbReference type="EMBL" id="CP001089">
    <property type="protein sequence ID" value="ACD95443.1"/>
    <property type="molecule type" value="Genomic_DNA"/>
</dbReference>
<dbReference type="RefSeq" id="WP_012469783.1">
    <property type="nucleotide sequence ID" value="NC_010814.1"/>
</dbReference>
<dbReference type="SMR" id="B3EAK5"/>
<dbReference type="STRING" id="398767.Glov_1727"/>
<dbReference type="KEGG" id="glo:Glov_1727"/>
<dbReference type="eggNOG" id="COG0504">
    <property type="taxonomic scope" value="Bacteria"/>
</dbReference>
<dbReference type="HOGENOM" id="CLU_011675_5_0_7"/>
<dbReference type="OrthoDB" id="9801107at2"/>
<dbReference type="UniPathway" id="UPA00159">
    <property type="reaction ID" value="UER00277"/>
</dbReference>
<dbReference type="Proteomes" id="UP000002420">
    <property type="component" value="Chromosome"/>
</dbReference>
<dbReference type="GO" id="GO:0005829">
    <property type="term" value="C:cytosol"/>
    <property type="evidence" value="ECO:0007669"/>
    <property type="project" value="TreeGrafter"/>
</dbReference>
<dbReference type="GO" id="GO:0005524">
    <property type="term" value="F:ATP binding"/>
    <property type="evidence" value="ECO:0007669"/>
    <property type="project" value="UniProtKB-KW"/>
</dbReference>
<dbReference type="GO" id="GO:0003883">
    <property type="term" value="F:CTP synthase activity"/>
    <property type="evidence" value="ECO:0007669"/>
    <property type="project" value="UniProtKB-UniRule"/>
</dbReference>
<dbReference type="GO" id="GO:0004359">
    <property type="term" value="F:glutaminase activity"/>
    <property type="evidence" value="ECO:0007669"/>
    <property type="project" value="RHEA"/>
</dbReference>
<dbReference type="GO" id="GO:0042802">
    <property type="term" value="F:identical protein binding"/>
    <property type="evidence" value="ECO:0007669"/>
    <property type="project" value="TreeGrafter"/>
</dbReference>
<dbReference type="GO" id="GO:0046872">
    <property type="term" value="F:metal ion binding"/>
    <property type="evidence" value="ECO:0007669"/>
    <property type="project" value="UniProtKB-KW"/>
</dbReference>
<dbReference type="GO" id="GO:0044210">
    <property type="term" value="P:'de novo' CTP biosynthetic process"/>
    <property type="evidence" value="ECO:0007669"/>
    <property type="project" value="UniProtKB-UniRule"/>
</dbReference>
<dbReference type="GO" id="GO:0019856">
    <property type="term" value="P:pyrimidine nucleobase biosynthetic process"/>
    <property type="evidence" value="ECO:0007669"/>
    <property type="project" value="TreeGrafter"/>
</dbReference>
<dbReference type="CDD" id="cd03113">
    <property type="entry name" value="CTPS_N"/>
    <property type="match status" value="1"/>
</dbReference>
<dbReference type="CDD" id="cd01746">
    <property type="entry name" value="GATase1_CTP_Synthase"/>
    <property type="match status" value="1"/>
</dbReference>
<dbReference type="FunFam" id="3.40.50.300:FF:000009">
    <property type="entry name" value="CTP synthase"/>
    <property type="match status" value="1"/>
</dbReference>
<dbReference type="FunFam" id="3.40.50.880:FF:000002">
    <property type="entry name" value="CTP synthase"/>
    <property type="match status" value="1"/>
</dbReference>
<dbReference type="Gene3D" id="3.40.50.880">
    <property type="match status" value="1"/>
</dbReference>
<dbReference type="Gene3D" id="3.40.50.300">
    <property type="entry name" value="P-loop containing nucleotide triphosphate hydrolases"/>
    <property type="match status" value="1"/>
</dbReference>
<dbReference type="HAMAP" id="MF_01227">
    <property type="entry name" value="PyrG"/>
    <property type="match status" value="1"/>
</dbReference>
<dbReference type="InterPro" id="IPR029062">
    <property type="entry name" value="Class_I_gatase-like"/>
</dbReference>
<dbReference type="InterPro" id="IPR004468">
    <property type="entry name" value="CTP_synthase"/>
</dbReference>
<dbReference type="InterPro" id="IPR017456">
    <property type="entry name" value="CTP_synthase_N"/>
</dbReference>
<dbReference type="InterPro" id="IPR017926">
    <property type="entry name" value="GATASE"/>
</dbReference>
<dbReference type="InterPro" id="IPR033828">
    <property type="entry name" value="GATase1_CTP_Synthase"/>
</dbReference>
<dbReference type="InterPro" id="IPR027417">
    <property type="entry name" value="P-loop_NTPase"/>
</dbReference>
<dbReference type="NCBIfam" id="NF003792">
    <property type="entry name" value="PRK05380.1"/>
    <property type="match status" value="1"/>
</dbReference>
<dbReference type="NCBIfam" id="TIGR00337">
    <property type="entry name" value="PyrG"/>
    <property type="match status" value="1"/>
</dbReference>
<dbReference type="PANTHER" id="PTHR11550">
    <property type="entry name" value="CTP SYNTHASE"/>
    <property type="match status" value="1"/>
</dbReference>
<dbReference type="PANTHER" id="PTHR11550:SF0">
    <property type="entry name" value="CTP SYNTHASE-RELATED"/>
    <property type="match status" value="1"/>
</dbReference>
<dbReference type="Pfam" id="PF06418">
    <property type="entry name" value="CTP_synth_N"/>
    <property type="match status" value="1"/>
</dbReference>
<dbReference type="Pfam" id="PF00117">
    <property type="entry name" value="GATase"/>
    <property type="match status" value="1"/>
</dbReference>
<dbReference type="SUPFAM" id="SSF52317">
    <property type="entry name" value="Class I glutamine amidotransferase-like"/>
    <property type="match status" value="1"/>
</dbReference>
<dbReference type="SUPFAM" id="SSF52540">
    <property type="entry name" value="P-loop containing nucleoside triphosphate hydrolases"/>
    <property type="match status" value="1"/>
</dbReference>
<dbReference type="PROSITE" id="PS51273">
    <property type="entry name" value="GATASE_TYPE_1"/>
    <property type="match status" value="1"/>
</dbReference>
<reference key="1">
    <citation type="submission" date="2008-05" db="EMBL/GenBank/DDBJ databases">
        <title>Complete sequence of chromosome of Geobacter lovleyi SZ.</title>
        <authorList>
            <consortium name="US DOE Joint Genome Institute"/>
            <person name="Lucas S."/>
            <person name="Copeland A."/>
            <person name="Lapidus A."/>
            <person name="Glavina del Rio T."/>
            <person name="Dalin E."/>
            <person name="Tice H."/>
            <person name="Bruce D."/>
            <person name="Goodwin L."/>
            <person name="Pitluck S."/>
            <person name="Chertkov O."/>
            <person name="Meincke L."/>
            <person name="Brettin T."/>
            <person name="Detter J.C."/>
            <person name="Han C."/>
            <person name="Tapia R."/>
            <person name="Kuske C.R."/>
            <person name="Schmutz J."/>
            <person name="Larimer F."/>
            <person name="Land M."/>
            <person name="Hauser L."/>
            <person name="Kyrpides N."/>
            <person name="Mikhailova N."/>
            <person name="Sung Y."/>
            <person name="Fletcher K.E."/>
            <person name="Ritalahti K.M."/>
            <person name="Loeffler F.E."/>
            <person name="Richardson P."/>
        </authorList>
    </citation>
    <scope>NUCLEOTIDE SEQUENCE [LARGE SCALE GENOMIC DNA]</scope>
    <source>
        <strain>ATCC BAA-1151 / DSM 17278 / SZ</strain>
    </source>
</reference>
<evidence type="ECO:0000255" key="1">
    <source>
        <dbReference type="HAMAP-Rule" id="MF_01227"/>
    </source>
</evidence>
<accession>B3EAK5</accession>
<protein>
    <recommendedName>
        <fullName evidence="1">CTP synthase</fullName>
        <ecNumber evidence="1">6.3.4.2</ecNumber>
    </recommendedName>
    <alternativeName>
        <fullName evidence="1">Cytidine 5'-triphosphate synthase</fullName>
    </alternativeName>
    <alternativeName>
        <fullName evidence="1">Cytidine triphosphate synthetase</fullName>
        <shortName evidence="1">CTP synthetase</shortName>
        <shortName evidence="1">CTPS</shortName>
    </alternativeName>
    <alternativeName>
        <fullName evidence="1">UTP--ammonia ligase</fullName>
    </alternativeName>
</protein>
<comment type="function">
    <text evidence="1">Catalyzes the ATP-dependent amination of UTP to CTP with either L-glutamine or ammonia as the source of nitrogen. Regulates intracellular CTP levels through interactions with the four ribonucleotide triphosphates.</text>
</comment>
<comment type="catalytic activity">
    <reaction evidence="1">
        <text>UTP + L-glutamine + ATP + H2O = CTP + L-glutamate + ADP + phosphate + 2 H(+)</text>
        <dbReference type="Rhea" id="RHEA:26426"/>
        <dbReference type="ChEBI" id="CHEBI:15377"/>
        <dbReference type="ChEBI" id="CHEBI:15378"/>
        <dbReference type="ChEBI" id="CHEBI:29985"/>
        <dbReference type="ChEBI" id="CHEBI:30616"/>
        <dbReference type="ChEBI" id="CHEBI:37563"/>
        <dbReference type="ChEBI" id="CHEBI:43474"/>
        <dbReference type="ChEBI" id="CHEBI:46398"/>
        <dbReference type="ChEBI" id="CHEBI:58359"/>
        <dbReference type="ChEBI" id="CHEBI:456216"/>
        <dbReference type="EC" id="6.3.4.2"/>
    </reaction>
</comment>
<comment type="catalytic activity">
    <reaction evidence="1">
        <text>L-glutamine + H2O = L-glutamate + NH4(+)</text>
        <dbReference type="Rhea" id="RHEA:15889"/>
        <dbReference type="ChEBI" id="CHEBI:15377"/>
        <dbReference type="ChEBI" id="CHEBI:28938"/>
        <dbReference type="ChEBI" id="CHEBI:29985"/>
        <dbReference type="ChEBI" id="CHEBI:58359"/>
    </reaction>
</comment>
<comment type="catalytic activity">
    <reaction evidence="1">
        <text>UTP + NH4(+) + ATP = CTP + ADP + phosphate + 2 H(+)</text>
        <dbReference type="Rhea" id="RHEA:16597"/>
        <dbReference type="ChEBI" id="CHEBI:15378"/>
        <dbReference type="ChEBI" id="CHEBI:28938"/>
        <dbReference type="ChEBI" id="CHEBI:30616"/>
        <dbReference type="ChEBI" id="CHEBI:37563"/>
        <dbReference type="ChEBI" id="CHEBI:43474"/>
        <dbReference type="ChEBI" id="CHEBI:46398"/>
        <dbReference type="ChEBI" id="CHEBI:456216"/>
    </reaction>
</comment>
<comment type="activity regulation">
    <text evidence="1">Allosterically activated by GTP, when glutamine is the substrate; GTP has no effect on the reaction when ammonia is the substrate. The allosteric effector GTP functions by stabilizing the protein conformation that binds the tetrahedral intermediate(s) formed during glutamine hydrolysis. Inhibited by the product CTP, via allosteric rather than competitive inhibition.</text>
</comment>
<comment type="pathway">
    <text evidence="1">Pyrimidine metabolism; CTP biosynthesis via de novo pathway; CTP from UDP: step 2/2.</text>
</comment>
<comment type="subunit">
    <text evidence="1">Homotetramer.</text>
</comment>
<comment type="miscellaneous">
    <text evidence="1">CTPSs have evolved a hybrid strategy for distinguishing between UTP and CTP. The overlapping regions of the product feedback inhibitory and substrate sites recognize a common feature in both compounds, the triphosphate moiety. To differentiate isosteric substrate and product pyrimidine rings, an additional pocket far from the expected kinase/ligase catalytic site, specifically recognizes the cytosine and ribose portions of the product inhibitor.</text>
</comment>
<comment type="similarity">
    <text evidence="1">Belongs to the CTP synthase family.</text>
</comment>
<sequence>MKTKFIFITGGVVSSIGKGLAAASLGALLESRGLRVTMQKLDPYINVDPGTMSPFQHGEVFVTDDGAETDLDLGHYERYTSARLSKKSNFTTGQVYFSVIDKERRGDYLGGTVQVIPHITDEIKSKIIENAKGADVAIVEVGGTVGDIESLPFLEAIRQFRFDRGAGNTLYVHVTLVPYIRTAGEMKTKPTQHSVMELRKIGIQPDILLCRCDRELPQDMKKKISLFCNVEESCVIPSVDSEHIYAVPLALNKERLDEQVVEKLNIWTKQPDLTPWQDVVETLRHPSHGEVRIAIVGKYVNLTESYKSLAEALTHGGIANDCRVYLKYVDAEKIEENGVEGWLDDVDGVLVPGGFGERGTEGKVLAIEYARTRQIPFFGICLGMQMAAIEFARNVCGLAKACSTEFKNDCKEPVIHLMEEQKSVNKKGGTMRLGACPCTVTKGTKAFDAYNEADISERHRHRYEFNNTYRELMTTKGLVLSGINQQKDLVEIIELPDHPWFLACQFHPEFKSKPLVPHPLFRAFIGASLTHRNQR</sequence>
<gene>
    <name evidence="1" type="primary">pyrG</name>
    <name type="ordered locus">Glov_1727</name>
</gene>
<feature type="chain" id="PRO_1000139463" description="CTP synthase">
    <location>
        <begin position="1"/>
        <end position="535"/>
    </location>
</feature>
<feature type="domain" description="Glutamine amidotransferase type-1" evidence="1">
    <location>
        <begin position="292"/>
        <end position="534"/>
    </location>
</feature>
<feature type="region of interest" description="Amidoligase domain" evidence="1">
    <location>
        <begin position="1"/>
        <end position="266"/>
    </location>
</feature>
<feature type="active site" description="Nucleophile; for glutamine hydrolysis" evidence="1">
    <location>
        <position position="381"/>
    </location>
</feature>
<feature type="active site" evidence="1">
    <location>
        <position position="507"/>
    </location>
</feature>
<feature type="active site" evidence="1">
    <location>
        <position position="509"/>
    </location>
</feature>
<feature type="binding site" evidence="1">
    <location>
        <position position="14"/>
    </location>
    <ligand>
        <name>CTP</name>
        <dbReference type="ChEBI" id="CHEBI:37563"/>
        <note>allosteric inhibitor</note>
    </ligand>
</feature>
<feature type="binding site" evidence="1">
    <location>
        <position position="14"/>
    </location>
    <ligand>
        <name>UTP</name>
        <dbReference type="ChEBI" id="CHEBI:46398"/>
    </ligand>
</feature>
<feature type="binding site" evidence="1">
    <location>
        <begin position="15"/>
        <end position="20"/>
    </location>
    <ligand>
        <name>ATP</name>
        <dbReference type="ChEBI" id="CHEBI:30616"/>
    </ligand>
</feature>
<feature type="binding site" evidence="1">
    <location>
        <position position="72"/>
    </location>
    <ligand>
        <name>ATP</name>
        <dbReference type="ChEBI" id="CHEBI:30616"/>
    </ligand>
</feature>
<feature type="binding site" evidence="1">
    <location>
        <position position="72"/>
    </location>
    <ligand>
        <name>Mg(2+)</name>
        <dbReference type="ChEBI" id="CHEBI:18420"/>
    </ligand>
</feature>
<feature type="binding site" evidence="1">
    <location>
        <position position="140"/>
    </location>
    <ligand>
        <name>Mg(2+)</name>
        <dbReference type="ChEBI" id="CHEBI:18420"/>
    </ligand>
</feature>
<feature type="binding site" evidence="1">
    <location>
        <begin position="147"/>
        <end position="149"/>
    </location>
    <ligand>
        <name>CTP</name>
        <dbReference type="ChEBI" id="CHEBI:37563"/>
        <note>allosteric inhibitor</note>
    </ligand>
</feature>
<feature type="binding site" evidence="1">
    <location>
        <begin position="187"/>
        <end position="192"/>
    </location>
    <ligand>
        <name>CTP</name>
        <dbReference type="ChEBI" id="CHEBI:37563"/>
        <note>allosteric inhibitor</note>
    </ligand>
</feature>
<feature type="binding site" evidence="1">
    <location>
        <begin position="187"/>
        <end position="192"/>
    </location>
    <ligand>
        <name>UTP</name>
        <dbReference type="ChEBI" id="CHEBI:46398"/>
    </ligand>
</feature>
<feature type="binding site" evidence="1">
    <location>
        <position position="223"/>
    </location>
    <ligand>
        <name>CTP</name>
        <dbReference type="ChEBI" id="CHEBI:37563"/>
        <note>allosteric inhibitor</note>
    </ligand>
</feature>
<feature type="binding site" evidence="1">
    <location>
        <position position="223"/>
    </location>
    <ligand>
        <name>UTP</name>
        <dbReference type="ChEBI" id="CHEBI:46398"/>
    </ligand>
</feature>
<feature type="binding site" evidence="1">
    <location>
        <position position="354"/>
    </location>
    <ligand>
        <name>L-glutamine</name>
        <dbReference type="ChEBI" id="CHEBI:58359"/>
    </ligand>
</feature>
<feature type="binding site" evidence="1">
    <location>
        <begin position="382"/>
        <end position="385"/>
    </location>
    <ligand>
        <name>L-glutamine</name>
        <dbReference type="ChEBI" id="CHEBI:58359"/>
    </ligand>
</feature>
<feature type="binding site" evidence="1">
    <location>
        <position position="405"/>
    </location>
    <ligand>
        <name>L-glutamine</name>
        <dbReference type="ChEBI" id="CHEBI:58359"/>
    </ligand>
</feature>
<feature type="binding site" evidence="1">
    <location>
        <position position="462"/>
    </location>
    <ligand>
        <name>L-glutamine</name>
        <dbReference type="ChEBI" id="CHEBI:58359"/>
    </ligand>
</feature>
<organism>
    <name type="scientific">Trichlorobacter lovleyi (strain ATCC BAA-1151 / DSM 17278 / SZ)</name>
    <name type="common">Geobacter lovleyi</name>
    <dbReference type="NCBI Taxonomy" id="398767"/>
    <lineage>
        <taxon>Bacteria</taxon>
        <taxon>Pseudomonadati</taxon>
        <taxon>Thermodesulfobacteriota</taxon>
        <taxon>Desulfuromonadia</taxon>
        <taxon>Geobacterales</taxon>
        <taxon>Geobacteraceae</taxon>
        <taxon>Trichlorobacter</taxon>
    </lineage>
</organism>
<name>PYRG_TRIL1</name>